<evidence type="ECO:0000255" key="1">
    <source>
        <dbReference type="HAMAP-Rule" id="MF_01390"/>
    </source>
</evidence>
<evidence type="ECO:0000305" key="2"/>
<feature type="chain" id="PRO_0000143241" description="Maturase K">
    <location>
        <begin position="1"/>
        <end position="508"/>
    </location>
</feature>
<feature type="sequence conflict" description="In Ref. 3; AAF21683." evidence="2" ref="3">
    <original>F</original>
    <variation>S</variation>
    <location>
        <position position="330"/>
    </location>
</feature>
<proteinExistence type="inferred from homology"/>
<gene>
    <name evidence="1" type="primary">matK</name>
</gene>
<organism>
    <name type="scientific">Antirrhinum majus</name>
    <name type="common">Garden snapdragon</name>
    <dbReference type="NCBI Taxonomy" id="4151"/>
    <lineage>
        <taxon>Eukaryota</taxon>
        <taxon>Viridiplantae</taxon>
        <taxon>Streptophyta</taxon>
        <taxon>Embryophyta</taxon>
        <taxon>Tracheophyta</taxon>
        <taxon>Spermatophyta</taxon>
        <taxon>Magnoliopsida</taxon>
        <taxon>eudicotyledons</taxon>
        <taxon>Gunneridae</taxon>
        <taxon>Pentapetalae</taxon>
        <taxon>asterids</taxon>
        <taxon>lamiids</taxon>
        <taxon>Lamiales</taxon>
        <taxon>Plantaginaceae</taxon>
        <taxon>Antirrhineae</taxon>
        <taxon>Antirrhinum</taxon>
    </lineage>
</organism>
<name>MATK_ANTMA</name>
<geneLocation type="chloroplast"/>
<dbReference type="EMBL" id="AF375189">
    <property type="protein sequence ID" value="AAM19361.1"/>
    <property type="molecule type" value="Genomic_DNA"/>
</dbReference>
<dbReference type="EMBL" id="AJ429342">
    <property type="protein sequence ID" value="CAD22238.1"/>
    <property type="molecule type" value="Genomic_DNA"/>
</dbReference>
<dbReference type="EMBL" id="AF051978">
    <property type="protein sequence ID" value="AAF21683.1"/>
    <property type="molecule type" value="Genomic_DNA"/>
</dbReference>
<dbReference type="GO" id="GO:0009507">
    <property type="term" value="C:chloroplast"/>
    <property type="evidence" value="ECO:0007669"/>
    <property type="project" value="UniProtKB-SubCell"/>
</dbReference>
<dbReference type="GO" id="GO:0003723">
    <property type="term" value="F:RNA binding"/>
    <property type="evidence" value="ECO:0007669"/>
    <property type="project" value="UniProtKB-KW"/>
</dbReference>
<dbReference type="GO" id="GO:0006397">
    <property type="term" value="P:mRNA processing"/>
    <property type="evidence" value="ECO:0007669"/>
    <property type="project" value="UniProtKB-KW"/>
</dbReference>
<dbReference type="GO" id="GO:0008380">
    <property type="term" value="P:RNA splicing"/>
    <property type="evidence" value="ECO:0007669"/>
    <property type="project" value="UniProtKB-UniRule"/>
</dbReference>
<dbReference type="GO" id="GO:0008033">
    <property type="term" value="P:tRNA processing"/>
    <property type="evidence" value="ECO:0007669"/>
    <property type="project" value="UniProtKB-KW"/>
</dbReference>
<dbReference type="HAMAP" id="MF_01390">
    <property type="entry name" value="MatK"/>
    <property type="match status" value="1"/>
</dbReference>
<dbReference type="InterPro" id="IPR024937">
    <property type="entry name" value="Domain_X"/>
</dbReference>
<dbReference type="InterPro" id="IPR002866">
    <property type="entry name" value="Maturase_MatK"/>
</dbReference>
<dbReference type="InterPro" id="IPR024942">
    <property type="entry name" value="Maturase_MatK_N"/>
</dbReference>
<dbReference type="PANTHER" id="PTHR34811">
    <property type="entry name" value="MATURASE K"/>
    <property type="match status" value="1"/>
</dbReference>
<dbReference type="PANTHER" id="PTHR34811:SF1">
    <property type="entry name" value="MATURASE K"/>
    <property type="match status" value="1"/>
</dbReference>
<dbReference type="Pfam" id="PF01348">
    <property type="entry name" value="Intron_maturas2"/>
    <property type="match status" value="1"/>
</dbReference>
<dbReference type="Pfam" id="PF01824">
    <property type="entry name" value="MatK_N"/>
    <property type="match status" value="1"/>
</dbReference>
<reference key="1">
    <citation type="journal article" date="2002" name="Syst. Bot.">
        <title>A phylogenetic and biogeographic analysis of the Cheloneae (Scrophulariaceae) based on ITS and matK sequence data.</title>
        <authorList>
            <person name="Wolfe A.D."/>
            <person name="Datwyler S.L."/>
            <person name="Randle C.P."/>
        </authorList>
        <dbReference type="AGRICOLA" id="IND23289696"/>
    </citation>
    <scope>NUCLEOTIDE SEQUENCE [GENOMIC DNA]</scope>
</reference>
<reference key="2">
    <citation type="journal article" date="2002" name="Mol. Phylogenet. Evol.">
        <title>Phylogenetics of asterids based on 3 coding and 3 non-coding chloroplast DNA markers and the utility of non-coding DNA at higher taxonomic levels.</title>
        <authorList>
            <person name="Bremer B."/>
            <person name="Bremer K."/>
            <person name="Heidari N."/>
            <person name="Erixon P."/>
            <person name="Olmstead R.G."/>
            <person name="Anderberg A.A."/>
            <person name="Kallersjo M."/>
            <person name="Barkhordarian E."/>
        </authorList>
    </citation>
    <scope>NUCLEOTIDE SEQUENCE [GENOMIC DNA]</scope>
</reference>
<reference key="3">
    <citation type="submission" date="1998-03" db="EMBL/GenBank/DDBJ databases">
        <title>The evolution of parasitism in Scrophulariaceae/Orobanchaceae: a critical analysis of progressive evolution and transitional forms based on plastid gene sequences.</title>
        <authorList>
            <person name="Young N.D."/>
            <person name="Steiner K.E."/>
            <person name="dePamphilis C.W."/>
        </authorList>
    </citation>
    <scope>NUCLEOTIDE SEQUENCE [GENOMIC DNA]</scope>
</reference>
<sequence>MEEIQRYLQLDRSQQHDFLYPLIFQEYIYAFAHDRGFGRSILSENPGYDKKSSLLIVKRLITRMYQQNHFIGSTNDSNQNPFLGRNKNLYYQIISEGFAFIVEIPFSLRLISSREGKNKKIVKSQNLRSIHSIFPFLEDNFSHLNFVLDILIPYPVHVEVLVQTLRYWVKDASSLHLVRFFLNEYCNWNSLILPKKASFSCSKINQRLFLFLYNSHVCEYESIFVFLRNQSSHLLSTSSGVLLERIYFYGKIECLVNVFVKVKDFQANLWLVKEPCMHYVRYQRKSILASKGTFLLIKKWKCYLMTFWQWHFLLWFQPRRIYINQLSNHFLEFLGYLSNVRMNPAVVRSQILENSFLMNNSIKKFDTLVPISPLIASLAKAKFCNVLGHPISKPVRADLSDSNIIDRFGHICRNLSHYHSGSFKKKSLYRIKYILRLSCARTLARKHKSTVRAFLKRLGSDLLEEFLMSEEDVLSLTFPKASSTLRGGYKSRIWYLDIIYINDLANYK</sequence>
<protein>
    <recommendedName>
        <fullName evidence="1">Maturase K</fullName>
    </recommendedName>
    <alternativeName>
        <fullName evidence="1">Intron maturase</fullName>
    </alternativeName>
</protein>
<comment type="function">
    <text evidence="1">Usually encoded in the trnK tRNA gene intron. Probably assists in splicing its own and other chloroplast group II introns.</text>
</comment>
<comment type="subcellular location">
    <subcellularLocation>
        <location>Plastid</location>
        <location>Chloroplast</location>
    </subcellularLocation>
</comment>
<comment type="similarity">
    <text evidence="1">Belongs to the intron maturase 2 family. MatK subfamily.</text>
</comment>
<keyword id="KW-0150">Chloroplast</keyword>
<keyword id="KW-0507">mRNA processing</keyword>
<keyword id="KW-0934">Plastid</keyword>
<keyword id="KW-0694">RNA-binding</keyword>
<keyword id="KW-0819">tRNA processing</keyword>
<accession>Q8SM20</accession>
<accession>Q8MC86</accession>
<accession>Q9TIS9</accession>